<dbReference type="EC" id="2.7.4.9" evidence="1"/>
<dbReference type="EMBL" id="CP001089">
    <property type="protein sequence ID" value="ACD95662.1"/>
    <property type="molecule type" value="Genomic_DNA"/>
</dbReference>
<dbReference type="RefSeq" id="WP_012470001.1">
    <property type="nucleotide sequence ID" value="NC_010814.1"/>
</dbReference>
<dbReference type="SMR" id="B3E2K5"/>
<dbReference type="STRING" id="398767.Glov_1946"/>
<dbReference type="KEGG" id="glo:Glov_1946"/>
<dbReference type="eggNOG" id="COG0125">
    <property type="taxonomic scope" value="Bacteria"/>
</dbReference>
<dbReference type="HOGENOM" id="CLU_049131_0_2_7"/>
<dbReference type="OrthoDB" id="9774907at2"/>
<dbReference type="Proteomes" id="UP000002420">
    <property type="component" value="Chromosome"/>
</dbReference>
<dbReference type="GO" id="GO:0005829">
    <property type="term" value="C:cytosol"/>
    <property type="evidence" value="ECO:0007669"/>
    <property type="project" value="TreeGrafter"/>
</dbReference>
<dbReference type="GO" id="GO:0005524">
    <property type="term" value="F:ATP binding"/>
    <property type="evidence" value="ECO:0007669"/>
    <property type="project" value="UniProtKB-UniRule"/>
</dbReference>
<dbReference type="GO" id="GO:0004798">
    <property type="term" value="F:dTMP kinase activity"/>
    <property type="evidence" value="ECO:0007669"/>
    <property type="project" value="UniProtKB-UniRule"/>
</dbReference>
<dbReference type="GO" id="GO:0006233">
    <property type="term" value="P:dTDP biosynthetic process"/>
    <property type="evidence" value="ECO:0007669"/>
    <property type="project" value="InterPro"/>
</dbReference>
<dbReference type="GO" id="GO:0006235">
    <property type="term" value="P:dTTP biosynthetic process"/>
    <property type="evidence" value="ECO:0007669"/>
    <property type="project" value="UniProtKB-UniRule"/>
</dbReference>
<dbReference type="GO" id="GO:0006227">
    <property type="term" value="P:dUDP biosynthetic process"/>
    <property type="evidence" value="ECO:0007669"/>
    <property type="project" value="TreeGrafter"/>
</dbReference>
<dbReference type="CDD" id="cd01672">
    <property type="entry name" value="TMPK"/>
    <property type="match status" value="1"/>
</dbReference>
<dbReference type="FunFam" id="3.40.50.300:FF:000225">
    <property type="entry name" value="Thymidylate kinase"/>
    <property type="match status" value="1"/>
</dbReference>
<dbReference type="Gene3D" id="3.40.50.300">
    <property type="entry name" value="P-loop containing nucleotide triphosphate hydrolases"/>
    <property type="match status" value="1"/>
</dbReference>
<dbReference type="HAMAP" id="MF_00165">
    <property type="entry name" value="Thymidylate_kinase"/>
    <property type="match status" value="1"/>
</dbReference>
<dbReference type="InterPro" id="IPR027417">
    <property type="entry name" value="P-loop_NTPase"/>
</dbReference>
<dbReference type="InterPro" id="IPR039430">
    <property type="entry name" value="Thymidylate_kin-like_dom"/>
</dbReference>
<dbReference type="InterPro" id="IPR018094">
    <property type="entry name" value="Thymidylate_kinase"/>
</dbReference>
<dbReference type="NCBIfam" id="TIGR00041">
    <property type="entry name" value="DTMP_kinase"/>
    <property type="match status" value="1"/>
</dbReference>
<dbReference type="PANTHER" id="PTHR10344">
    <property type="entry name" value="THYMIDYLATE KINASE"/>
    <property type="match status" value="1"/>
</dbReference>
<dbReference type="PANTHER" id="PTHR10344:SF4">
    <property type="entry name" value="UMP-CMP KINASE 2, MITOCHONDRIAL"/>
    <property type="match status" value="1"/>
</dbReference>
<dbReference type="Pfam" id="PF02223">
    <property type="entry name" value="Thymidylate_kin"/>
    <property type="match status" value="1"/>
</dbReference>
<dbReference type="SUPFAM" id="SSF52540">
    <property type="entry name" value="P-loop containing nucleoside triphosphate hydrolases"/>
    <property type="match status" value="1"/>
</dbReference>
<comment type="function">
    <text evidence="1">Phosphorylation of dTMP to form dTDP in both de novo and salvage pathways of dTTP synthesis.</text>
</comment>
<comment type="catalytic activity">
    <reaction evidence="1">
        <text>dTMP + ATP = dTDP + ADP</text>
        <dbReference type="Rhea" id="RHEA:13517"/>
        <dbReference type="ChEBI" id="CHEBI:30616"/>
        <dbReference type="ChEBI" id="CHEBI:58369"/>
        <dbReference type="ChEBI" id="CHEBI:63528"/>
        <dbReference type="ChEBI" id="CHEBI:456216"/>
        <dbReference type="EC" id="2.7.4.9"/>
    </reaction>
</comment>
<comment type="similarity">
    <text evidence="1">Belongs to the thymidylate kinase family.</text>
</comment>
<proteinExistence type="inferred from homology"/>
<evidence type="ECO:0000255" key="1">
    <source>
        <dbReference type="HAMAP-Rule" id="MF_00165"/>
    </source>
</evidence>
<sequence length="212" mass="22693">MFITFEGIEGCGKSTQIALLAASLQQAGQRVLLTREPGGCPIADQIRSVLLDAANTALVPMAELMLYAASRAQHLAEVVSPALAEGVIVLCDRFSDATRAYQSFGRGIDRQVIETLNSLACDGISPDLTVLLDCPVETGLGRARQRIDSTSGPREERFELESLAFHQRVRDGYLQLAAEEPGRFVIVDATVQPAQVASAISDAVLSRLAVPV</sequence>
<gene>
    <name evidence="1" type="primary">tmk</name>
    <name type="ordered locus">Glov_1946</name>
</gene>
<feature type="chain" id="PRO_1000123573" description="Thymidylate kinase">
    <location>
        <begin position="1"/>
        <end position="212"/>
    </location>
</feature>
<feature type="binding site" evidence="1">
    <location>
        <begin position="7"/>
        <end position="14"/>
    </location>
    <ligand>
        <name>ATP</name>
        <dbReference type="ChEBI" id="CHEBI:30616"/>
    </ligand>
</feature>
<accession>B3E2K5</accession>
<reference key="1">
    <citation type="submission" date="2008-05" db="EMBL/GenBank/DDBJ databases">
        <title>Complete sequence of chromosome of Geobacter lovleyi SZ.</title>
        <authorList>
            <consortium name="US DOE Joint Genome Institute"/>
            <person name="Lucas S."/>
            <person name="Copeland A."/>
            <person name="Lapidus A."/>
            <person name="Glavina del Rio T."/>
            <person name="Dalin E."/>
            <person name="Tice H."/>
            <person name="Bruce D."/>
            <person name="Goodwin L."/>
            <person name="Pitluck S."/>
            <person name="Chertkov O."/>
            <person name="Meincke L."/>
            <person name="Brettin T."/>
            <person name="Detter J.C."/>
            <person name="Han C."/>
            <person name="Tapia R."/>
            <person name="Kuske C.R."/>
            <person name="Schmutz J."/>
            <person name="Larimer F."/>
            <person name="Land M."/>
            <person name="Hauser L."/>
            <person name="Kyrpides N."/>
            <person name="Mikhailova N."/>
            <person name="Sung Y."/>
            <person name="Fletcher K.E."/>
            <person name="Ritalahti K.M."/>
            <person name="Loeffler F.E."/>
            <person name="Richardson P."/>
        </authorList>
    </citation>
    <scope>NUCLEOTIDE SEQUENCE [LARGE SCALE GENOMIC DNA]</scope>
    <source>
        <strain>ATCC BAA-1151 / DSM 17278 / SZ</strain>
    </source>
</reference>
<organism>
    <name type="scientific">Trichlorobacter lovleyi (strain ATCC BAA-1151 / DSM 17278 / SZ)</name>
    <name type="common">Geobacter lovleyi</name>
    <dbReference type="NCBI Taxonomy" id="398767"/>
    <lineage>
        <taxon>Bacteria</taxon>
        <taxon>Pseudomonadati</taxon>
        <taxon>Thermodesulfobacteriota</taxon>
        <taxon>Desulfuromonadia</taxon>
        <taxon>Geobacterales</taxon>
        <taxon>Geobacteraceae</taxon>
        <taxon>Trichlorobacter</taxon>
    </lineage>
</organism>
<name>KTHY_TRIL1</name>
<keyword id="KW-0067">ATP-binding</keyword>
<keyword id="KW-0418">Kinase</keyword>
<keyword id="KW-0545">Nucleotide biosynthesis</keyword>
<keyword id="KW-0547">Nucleotide-binding</keyword>
<keyword id="KW-1185">Reference proteome</keyword>
<keyword id="KW-0808">Transferase</keyword>
<protein>
    <recommendedName>
        <fullName evidence="1">Thymidylate kinase</fullName>
        <ecNumber evidence="1">2.7.4.9</ecNumber>
    </recommendedName>
    <alternativeName>
        <fullName evidence="1">dTMP kinase</fullName>
    </alternativeName>
</protein>